<keyword id="KW-0963">Cytoplasm</keyword>
<keyword id="KW-0694">RNA-binding</keyword>
<feature type="chain" id="PRO_0000278062" description="SsrA-binding protein">
    <location>
        <begin position="1"/>
        <end position="152"/>
    </location>
</feature>
<reference key="1">
    <citation type="journal article" date="2005" name="PLoS Biol.">
        <title>The genome sequence of Rickettsia felis identifies the first putative conjugative plasmid in an obligate intracellular parasite.</title>
        <authorList>
            <person name="Ogata H."/>
            <person name="Renesto P."/>
            <person name="Audic S."/>
            <person name="Robert C."/>
            <person name="Blanc G."/>
            <person name="Fournier P.-E."/>
            <person name="Parinello H."/>
            <person name="Claverie J.-M."/>
            <person name="Raoult D."/>
        </authorList>
    </citation>
    <scope>NUCLEOTIDE SEQUENCE [LARGE SCALE GENOMIC DNA]</scope>
    <source>
        <strain>ATCC VR-1525 / URRWXCal2</strain>
    </source>
</reference>
<dbReference type="EMBL" id="CP000053">
    <property type="protein sequence ID" value="AAY61512.1"/>
    <property type="molecule type" value="Genomic_DNA"/>
</dbReference>
<dbReference type="SMR" id="Q4ULR1"/>
<dbReference type="STRING" id="315456.RF_0661"/>
<dbReference type="KEGG" id="rfe:RF_0661"/>
<dbReference type="eggNOG" id="COG0691">
    <property type="taxonomic scope" value="Bacteria"/>
</dbReference>
<dbReference type="HOGENOM" id="CLU_108953_0_1_5"/>
<dbReference type="OrthoDB" id="9805462at2"/>
<dbReference type="Proteomes" id="UP000008548">
    <property type="component" value="Chromosome"/>
</dbReference>
<dbReference type="GO" id="GO:0005829">
    <property type="term" value="C:cytosol"/>
    <property type="evidence" value="ECO:0007669"/>
    <property type="project" value="TreeGrafter"/>
</dbReference>
<dbReference type="GO" id="GO:0003723">
    <property type="term" value="F:RNA binding"/>
    <property type="evidence" value="ECO:0007669"/>
    <property type="project" value="UniProtKB-UniRule"/>
</dbReference>
<dbReference type="GO" id="GO:0070929">
    <property type="term" value="P:trans-translation"/>
    <property type="evidence" value="ECO:0007669"/>
    <property type="project" value="UniProtKB-UniRule"/>
</dbReference>
<dbReference type="CDD" id="cd09294">
    <property type="entry name" value="SmpB"/>
    <property type="match status" value="1"/>
</dbReference>
<dbReference type="Gene3D" id="2.40.280.10">
    <property type="match status" value="1"/>
</dbReference>
<dbReference type="HAMAP" id="MF_00023">
    <property type="entry name" value="SmpB"/>
    <property type="match status" value="1"/>
</dbReference>
<dbReference type="InterPro" id="IPR023620">
    <property type="entry name" value="SmpB"/>
</dbReference>
<dbReference type="InterPro" id="IPR000037">
    <property type="entry name" value="SsrA-bd_prot"/>
</dbReference>
<dbReference type="InterPro" id="IPR020081">
    <property type="entry name" value="SsrA-bd_prot_CS"/>
</dbReference>
<dbReference type="NCBIfam" id="NF003843">
    <property type="entry name" value="PRK05422.1"/>
    <property type="match status" value="1"/>
</dbReference>
<dbReference type="NCBIfam" id="TIGR00086">
    <property type="entry name" value="smpB"/>
    <property type="match status" value="1"/>
</dbReference>
<dbReference type="PANTHER" id="PTHR30308:SF2">
    <property type="entry name" value="SSRA-BINDING PROTEIN"/>
    <property type="match status" value="1"/>
</dbReference>
<dbReference type="PANTHER" id="PTHR30308">
    <property type="entry name" value="TMRNA-BINDING COMPONENT OF TRANS-TRANSLATION TAGGING COMPLEX"/>
    <property type="match status" value="1"/>
</dbReference>
<dbReference type="Pfam" id="PF01668">
    <property type="entry name" value="SmpB"/>
    <property type="match status" value="1"/>
</dbReference>
<dbReference type="SUPFAM" id="SSF74982">
    <property type="entry name" value="Small protein B (SmpB)"/>
    <property type="match status" value="1"/>
</dbReference>
<dbReference type="PROSITE" id="PS01317">
    <property type="entry name" value="SSRP"/>
    <property type="match status" value="1"/>
</dbReference>
<gene>
    <name evidence="1" type="primary">smpB</name>
    <name type="ordered locus">RF_0661</name>
</gene>
<protein>
    <recommendedName>
        <fullName evidence="1">SsrA-binding protein</fullName>
    </recommendedName>
    <alternativeName>
        <fullName evidence="1">Small protein B</fullName>
    </alternativeName>
</protein>
<name>SSRP_RICFE</name>
<accession>Q4ULR1</accession>
<proteinExistence type="inferred from homology"/>
<evidence type="ECO:0000255" key="1">
    <source>
        <dbReference type="HAMAP-Rule" id="MF_00023"/>
    </source>
</evidence>
<organism>
    <name type="scientific">Rickettsia felis (strain ATCC VR-1525 / URRWXCal2)</name>
    <name type="common">Rickettsia azadi</name>
    <dbReference type="NCBI Taxonomy" id="315456"/>
    <lineage>
        <taxon>Bacteria</taxon>
        <taxon>Pseudomonadati</taxon>
        <taxon>Pseudomonadota</taxon>
        <taxon>Alphaproteobacteria</taxon>
        <taxon>Rickettsiales</taxon>
        <taxon>Rickettsiaceae</taxon>
        <taxon>Rickettsieae</taxon>
        <taxon>Rickettsia</taxon>
        <taxon>spotted fever group</taxon>
    </lineage>
</organism>
<sequence length="152" mass="17868">MTEYKKVIAQNKKALFNYFIEERLEAGIVLKGSEVQSLRQGKASIEESHAADTGHEVFLYNCHIAEYEKANRFNHSTRRPRKLLLHTKEIKKIIGRIRIKGYTLVALSMYFNKKNKVKVELGIAKGKKLHDKRESIKEKDWKRDQSRLIRQK</sequence>
<comment type="function">
    <text evidence="1">Required for rescue of stalled ribosomes mediated by trans-translation. Binds to transfer-messenger RNA (tmRNA), required for stable association of tmRNA with ribosomes. tmRNA and SmpB together mimic tRNA shape, replacing the anticodon stem-loop with SmpB. tmRNA is encoded by the ssrA gene; the 2 termini fold to resemble tRNA(Ala) and it encodes a 'tag peptide', a short internal open reading frame. During trans-translation Ala-aminoacylated tmRNA acts like a tRNA, entering the A-site of stalled ribosomes, displacing the stalled mRNA. The ribosome then switches to translate the ORF on the tmRNA; the nascent peptide is terminated with the 'tag peptide' encoded by the tmRNA and targeted for degradation. The ribosome is freed to recommence translation, which seems to be the essential function of trans-translation.</text>
</comment>
<comment type="subcellular location">
    <subcellularLocation>
        <location evidence="1">Cytoplasm</location>
    </subcellularLocation>
    <text evidence="1">The tmRNA-SmpB complex associates with stalled 70S ribosomes.</text>
</comment>
<comment type="similarity">
    <text evidence="1">Belongs to the SmpB family.</text>
</comment>